<evidence type="ECO:0000250" key="1"/>
<evidence type="ECO:0000255" key="2"/>
<evidence type="ECO:0000256" key="3">
    <source>
        <dbReference type="SAM" id="MobiDB-lite"/>
    </source>
</evidence>
<evidence type="ECO:0000305" key="4"/>
<evidence type="ECO:0000312" key="5">
    <source>
        <dbReference type="EMBL" id="EEE59109.1"/>
    </source>
</evidence>
<dbReference type="EMBL" id="DP000009">
    <property type="protein sequence ID" value="ABF96133.1"/>
    <property type="molecule type" value="Genomic_DNA"/>
</dbReference>
<dbReference type="EMBL" id="AP008209">
    <property type="status" value="NOT_ANNOTATED_CDS"/>
    <property type="molecule type" value="Genomic_DNA"/>
</dbReference>
<dbReference type="EMBL" id="AP014959">
    <property type="protein sequence ID" value="BAS84326.1"/>
    <property type="molecule type" value="Genomic_DNA"/>
</dbReference>
<dbReference type="EMBL" id="CM000140">
    <property type="protein sequence ID" value="EEE59109.1"/>
    <property type="molecule type" value="Genomic_DNA"/>
</dbReference>
<dbReference type="SMR" id="Q10KX8"/>
<dbReference type="FunCoup" id="Q10KX8">
    <property type="interactions" value="8"/>
</dbReference>
<dbReference type="STRING" id="39947.Q10KX8"/>
<dbReference type="PaxDb" id="39947-Q10KX8"/>
<dbReference type="EnsemblPlants" id="Os03t0366800-01">
    <property type="protein sequence ID" value="Os03t0366800-01"/>
    <property type="gene ID" value="Os03g0366800"/>
</dbReference>
<dbReference type="GeneID" id="107277264"/>
<dbReference type="Gramene" id="Os03t0366800-01">
    <property type="protein sequence ID" value="Os03t0366800-01"/>
    <property type="gene ID" value="Os03g0366800"/>
</dbReference>
<dbReference type="KEGG" id="osa:107277264"/>
<dbReference type="eggNOG" id="KOG0627">
    <property type="taxonomic scope" value="Eukaryota"/>
</dbReference>
<dbReference type="HOGENOM" id="CLU_030308_3_1_1"/>
<dbReference type="InParanoid" id="Q10KX8"/>
<dbReference type="OMA" id="PAYHRMG"/>
<dbReference type="OrthoDB" id="60033at2759"/>
<dbReference type="Proteomes" id="UP000000763">
    <property type="component" value="Chromosome 3"/>
</dbReference>
<dbReference type="Proteomes" id="UP000007752">
    <property type="component" value="Chromosome 3"/>
</dbReference>
<dbReference type="Proteomes" id="UP000059680">
    <property type="component" value="Chromosome 3"/>
</dbReference>
<dbReference type="GO" id="GO:0005634">
    <property type="term" value="C:nucleus"/>
    <property type="evidence" value="ECO:0000318"/>
    <property type="project" value="GO_Central"/>
</dbReference>
<dbReference type="GO" id="GO:0003700">
    <property type="term" value="F:DNA-binding transcription factor activity"/>
    <property type="evidence" value="ECO:0000318"/>
    <property type="project" value="GO_Central"/>
</dbReference>
<dbReference type="GO" id="GO:0043565">
    <property type="term" value="F:sequence-specific DNA binding"/>
    <property type="evidence" value="ECO:0007669"/>
    <property type="project" value="InterPro"/>
</dbReference>
<dbReference type="GO" id="GO:0006357">
    <property type="term" value="P:regulation of transcription by RNA polymerase II"/>
    <property type="evidence" value="ECO:0000318"/>
    <property type="project" value="GO_Central"/>
</dbReference>
<dbReference type="FunFam" id="1.10.10.10:FF:000037">
    <property type="entry name" value="Heat stress transcription factor B-4"/>
    <property type="match status" value="1"/>
</dbReference>
<dbReference type="Gene3D" id="1.10.10.10">
    <property type="entry name" value="Winged helix-like DNA-binding domain superfamily/Winged helix DNA-binding domain"/>
    <property type="match status" value="1"/>
</dbReference>
<dbReference type="InterPro" id="IPR000232">
    <property type="entry name" value="HSF_DNA-bd"/>
</dbReference>
<dbReference type="InterPro" id="IPR036388">
    <property type="entry name" value="WH-like_DNA-bd_sf"/>
</dbReference>
<dbReference type="InterPro" id="IPR036390">
    <property type="entry name" value="WH_DNA-bd_sf"/>
</dbReference>
<dbReference type="PANTHER" id="PTHR10015">
    <property type="entry name" value="HEAT SHOCK TRANSCRIPTION FACTOR"/>
    <property type="match status" value="1"/>
</dbReference>
<dbReference type="PANTHER" id="PTHR10015:SF309">
    <property type="entry name" value="HEAT STRESS TRANSCRIPTION FACTOR B-4D"/>
    <property type="match status" value="1"/>
</dbReference>
<dbReference type="Pfam" id="PF00447">
    <property type="entry name" value="HSF_DNA-bind"/>
    <property type="match status" value="1"/>
</dbReference>
<dbReference type="PRINTS" id="PR00056">
    <property type="entry name" value="HSFDOMAIN"/>
</dbReference>
<dbReference type="SMART" id="SM00415">
    <property type="entry name" value="HSF"/>
    <property type="match status" value="1"/>
</dbReference>
<dbReference type="SUPFAM" id="SSF46785">
    <property type="entry name" value="Winged helix' DNA-binding domain"/>
    <property type="match status" value="1"/>
</dbReference>
<dbReference type="PROSITE" id="PS00434">
    <property type="entry name" value="HSF_DOMAIN"/>
    <property type="match status" value="1"/>
</dbReference>
<organism>
    <name type="scientific">Oryza sativa subsp. japonica</name>
    <name type="common">Rice</name>
    <dbReference type="NCBI Taxonomy" id="39947"/>
    <lineage>
        <taxon>Eukaryota</taxon>
        <taxon>Viridiplantae</taxon>
        <taxon>Streptophyta</taxon>
        <taxon>Embryophyta</taxon>
        <taxon>Tracheophyta</taxon>
        <taxon>Spermatophyta</taxon>
        <taxon>Magnoliopsida</taxon>
        <taxon>Liliopsida</taxon>
        <taxon>Poales</taxon>
        <taxon>Poaceae</taxon>
        <taxon>BOP clade</taxon>
        <taxon>Oryzoideae</taxon>
        <taxon>Oryzeae</taxon>
        <taxon>Oryzinae</taxon>
        <taxon>Oryza</taxon>
        <taxon>Oryza sativa</taxon>
    </lineage>
</organism>
<comment type="function">
    <text evidence="1">Transcriptional regulator that specifically binds DNA of heat shock promoter elements (HSE).</text>
</comment>
<comment type="subunit">
    <text evidence="1">Homotrimer.</text>
</comment>
<comment type="subcellular location">
    <subcellularLocation>
        <location evidence="4">Nucleus</location>
    </subcellularLocation>
</comment>
<comment type="domain">
    <text>The hydrophobic-rich region (HR-A/B) corresponds to the oligomerization domain.</text>
</comment>
<comment type="PTM">
    <text evidence="1">Exhibits temperature-dependent phosphorylation.</text>
</comment>
<comment type="similarity">
    <text evidence="4">Belongs to the HSF family. Class B subfamily.</text>
</comment>
<proteinExistence type="inferred from homology"/>
<accession>Q10KX8</accession>
<accession>B9F8L1</accession>
<feature type="chain" id="PRO_0000350840" description="Heat stress transcription factor B-4d">
    <location>
        <begin position="1"/>
        <end position="305"/>
    </location>
</feature>
<feature type="region of interest" description="Hydrophobic repeat HR-A/B">
    <location>
        <begin position="201"/>
        <end position="230"/>
    </location>
</feature>
<feature type="region of interest" description="Disordered" evidence="3">
    <location>
        <begin position="286"/>
        <end position="305"/>
    </location>
</feature>
<feature type="short sequence motif" description="Nuclear localization signal" evidence="2">
    <location>
        <begin position="286"/>
        <end position="289"/>
    </location>
</feature>
<feature type="compositionally biased region" description="Acidic residues" evidence="3">
    <location>
        <begin position="294"/>
        <end position="305"/>
    </location>
</feature>
<gene>
    <name type="primary">HSFB4D</name>
    <name type="synonym">HSF10</name>
    <name type="ordered locus">Os03g0366800</name>
    <name type="ordered locus">LOC_Os03g25120</name>
    <name evidence="5" type="ORF">OsJ_10971</name>
</gene>
<keyword id="KW-0238">DNA-binding</keyword>
<keyword id="KW-0539">Nucleus</keyword>
<keyword id="KW-0597">Phosphoprotein</keyword>
<keyword id="KW-1185">Reference proteome</keyword>
<keyword id="KW-0346">Stress response</keyword>
<keyword id="KW-0804">Transcription</keyword>
<keyword id="KW-0805">Transcription regulation</keyword>
<sequence length="305" mass="33951">MAFLVERCGGEMVVSMERSHGRSTTTAAAVTAAPAPFLSKTYQLVDDPSTDDVVSWGEDEATFVVWRPPEFARDLLPNYFKHNNFSSFVRQLNTYGFRKIVADRWEFANEFFRKGAKHLLSEIHRRKSSSCSQPQPPPPFPMHQHYPLSLFSPPTTPRSPPVGAAAAAAYHFQEEYCSSPADYAGGGGDLLAALSEDNRQLRRRNSLLLSELAHMRKLYNDIIYFLQNHVEPVAPPPLAAATSCRLVELGPSTTERRRCAASPSGDNDDDAAVRLFGVRLDDDHGKKRRVQLVQEDEGDEQGSEG</sequence>
<reference key="1">
    <citation type="journal article" date="2005" name="Genome Res.">
        <title>Sequence, annotation, and analysis of synteny between rice chromosome 3 and diverged grass species.</title>
        <authorList>
            <consortium name="The rice chromosome 3 sequencing consortium"/>
            <person name="Buell C.R."/>
            <person name="Yuan Q."/>
            <person name="Ouyang S."/>
            <person name="Liu J."/>
            <person name="Zhu W."/>
            <person name="Wang A."/>
            <person name="Maiti R."/>
            <person name="Haas B."/>
            <person name="Wortman J."/>
            <person name="Pertea M."/>
            <person name="Jones K.M."/>
            <person name="Kim M."/>
            <person name="Overton L."/>
            <person name="Tsitrin T."/>
            <person name="Fadrosh D."/>
            <person name="Bera J."/>
            <person name="Weaver B."/>
            <person name="Jin S."/>
            <person name="Johri S."/>
            <person name="Reardon M."/>
            <person name="Webb K."/>
            <person name="Hill J."/>
            <person name="Moffat K."/>
            <person name="Tallon L."/>
            <person name="Van Aken S."/>
            <person name="Lewis M."/>
            <person name="Utterback T."/>
            <person name="Feldblyum T."/>
            <person name="Zismann V."/>
            <person name="Iobst S."/>
            <person name="Hsiao J."/>
            <person name="de Vazeille A.R."/>
            <person name="Salzberg S.L."/>
            <person name="White O."/>
            <person name="Fraser C.M."/>
            <person name="Yu Y."/>
            <person name="Kim H."/>
            <person name="Rambo T."/>
            <person name="Currie J."/>
            <person name="Collura K."/>
            <person name="Kernodle-Thompson S."/>
            <person name="Wei F."/>
            <person name="Kudrna K."/>
            <person name="Ammiraju J.S.S."/>
            <person name="Luo M."/>
            <person name="Goicoechea J.L."/>
            <person name="Wing R.A."/>
            <person name="Henry D."/>
            <person name="Oates R."/>
            <person name="Palmer M."/>
            <person name="Pries G."/>
            <person name="Saski C."/>
            <person name="Simmons J."/>
            <person name="Soderlund C."/>
            <person name="Nelson W."/>
            <person name="de la Bastide M."/>
            <person name="Spiegel L."/>
            <person name="Nascimento L."/>
            <person name="Huang E."/>
            <person name="Preston R."/>
            <person name="Zutavern T."/>
            <person name="Palmer L."/>
            <person name="O'Shaughnessy A."/>
            <person name="Dike S."/>
            <person name="McCombie W.R."/>
            <person name="Minx P."/>
            <person name="Cordum H."/>
            <person name="Wilson R."/>
            <person name="Jin W."/>
            <person name="Lee H.R."/>
            <person name="Jiang J."/>
            <person name="Jackson S."/>
        </authorList>
    </citation>
    <scope>NUCLEOTIDE SEQUENCE [LARGE SCALE GENOMIC DNA]</scope>
    <source>
        <strain>cv. Nipponbare</strain>
    </source>
</reference>
<reference key="2">
    <citation type="journal article" date="2005" name="Nature">
        <title>The map-based sequence of the rice genome.</title>
        <authorList>
            <consortium name="International rice genome sequencing project (IRGSP)"/>
        </authorList>
    </citation>
    <scope>NUCLEOTIDE SEQUENCE [LARGE SCALE GENOMIC DNA]</scope>
    <source>
        <strain>cv. Nipponbare</strain>
    </source>
</reference>
<reference key="3">
    <citation type="journal article" date="2008" name="Nucleic Acids Res.">
        <title>The rice annotation project database (RAP-DB): 2008 update.</title>
        <authorList>
            <consortium name="The rice annotation project (RAP)"/>
        </authorList>
    </citation>
    <scope>GENOME REANNOTATION</scope>
    <source>
        <strain>cv. Nipponbare</strain>
    </source>
</reference>
<reference key="4">
    <citation type="journal article" date="2013" name="Rice">
        <title>Improvement of the Oryza sativa Nipponbare reference genome using next generation sequence and optical map data.</title>
        <authorList>
            <person name="Kawahara Y."/>
            <person name="de la Bastide M."/>
            <person name="Hamilton J.P."/>
            <person name="Kanamori H."/>
            <person name="McCombie W.R."/>
            <person name="Ouyang S."/>
            <person name="Schwartz D.C."/>
            <person name="Tanaka T."/>
            <person name="Wu J."/>
            <person name="Zhou S."/>
            <person name="Childs K.L."/>
            <person name="Davidson R.M."/>
            <person name="Lin H."/>
            <person name="Quesada-Ocampo L."/>
            <person name="Vaillancourt B."/>
            <person name="Sakai H."/>
            <person name="Lee S.S."/>
            <person name="Kim J."/>
            <person name="Numa H."/>
            <person name="Itoh T."/>
            <person name="Buell C.R."/>
            <person name="Matsumoto T."/>
        </authorList>
    </citation>
    <scope>GENOME REANNOTATION</scope>
    <source>
        <strain>cv. Nipponbare</strain>
    </source>
</reference>
<reference key="5">
    <citation type="journal article" date="2005" name="PLoS Biol.">
        <title>The genomes of Oryza sativa: a history of duplications.</title>
        <authorList>
            <person name="Yu J."/>
            <person name="Wang J."/>
            <person name="Lin W."/>
            <person name="Li S."/>
            <person name="Li H."/>
            <person name="Zhou J."/>
            <person name="Ni P."/>
            <person name="Dong W."/>
            <person name="Hu S."/>
            <person name="Zeng C."/>
            <person name="Zhang J."/>
            <person name="Zhang Y."/>
            <person name="Li R."/>
            <person name="Xu Z."/>
            <person name="Li S."/>
            <person name="Li X."/>
            <person name="Zheng H."/>
            <person name="Cong L."/>
            <person name="Lin L."/>
            <person name="Yin J."/>
            <person name="Geng J."/>
            <person name="Li G."/>
            <person name="Shi J."/>
            <person name="Liu J."/>
            <person name="Lv H."/>
            <person name="Li J."/>
            <person name="Wang J."/>
            <person name="Deng Y."/>
            <person name="Ran L."/>
            <person name="Shi X."/>
            <person name="Wang X."/>
            <person name="Wu Q."/>
            <person name="Li C."/>
            <person name="Ren X."/>
            <person name="Wang J."/>
            <person name="Wang X."/>
            <person name="Li D."/>
            <person name="Liu D."/>
            <person name="Zhang X."/>
            <person name="Ji Z."/>
            <person name="Zhao W."/>
            <person name="Sun Y."/>
            <person name="Zhang Z."/>
            <person name="Bao J."/>
            <person name="Han Y."/>
            <person name="Dong L."/>
            <person name="Ji J."/>
            <person name="Chen P."/>
            <person name="Wu S."/>
            <person name="Liu J."/>
            <person name="Xiao Y."/>
            <person name="Bu D."/>
            <person name="Tan J."/>
            <person name="Yang L."/>
            <person name="Ye C."/>
            <person name="Zhang J."/>
            <person name="Xu J."/>
            <person name="Zhou Y."/>
            <person name="Yu Y."/>
            <person name="Zhang B."/>
            <person name="Zhuang S."/>
            <person name="Wei H."/>
            <person name="Liu B."/>
            <person name="Lei M."/>
            <person name="Yu H."/>
            <person name="Li Y."/>
            <person name="Xu H."/>
            <person name="Wei S."/>
            <person name="He X."/>
            <person name="Fang L."/>
            <person name="Zhang Z."/>
            <person name="Zhang Y."/>
            <person name="Huang X."/>
            <person name="Su Z."/>
            <person name="Tong W."/>
            <person name="Li J."/>
            <person name="Tong Z."/>
            <person name="Li S."/>
            <person name="Ye J."/>
            <person name="Wang L."/>
            <person name="Fang L."/>
            <person name="Lei T."/>
            <person name="Chen C.-S."/>
            <person name="Chen H.-C."/>
            <person name="Xu Z."/>
            <person name="Li H."/>
            <person name="Huang H."/>
            <person name="Zhang F."/>
            <person name="Xu H."/>
            <person name="Li N."/>
            <person name="Zhao C."/>
            <person name="Li S."/>
            <person name="Dong L."/>
            <person name="Huang Y."/>
            <person name="Li L."/>
            <person name="Xi Y."/>
            <person name="Qi Q."/>
            <person name="Li W."/>
            <person name="Zhang B."/>
            <person name="Hu W."/>
            <person name="Zhang Y."/>
            <person name="Tian X."/>
            <person name="Jiao Y."/>
            <person name="Liang X."/>
            <person name="Jin J."/>
            <person name="Gao L."/>
            <person name="Zheng W."/>
            <person name="Hao B."/>
            <person name="Liu S.-M."/>
            <person name="Wang W."/>
            <person name="Yuan L."/>
            <person name="Cao M."/>
            <person name="McDermott J."/>
            <person name="Samudrala R."/>
            <person name="Wang J."/>
            <person name="Wong G.K.-S."/>
            <person name="Yang H."/>
        </authorList>
    </citation>
    <scope>NUCLEOTIDE SEQUENCE [LARGE SCALE GENOMIC DNA]</scope>
    <source>
        <strain>cv. Nipponbare</strain>
    </source>
</reference>
<reference key="6">
    <citation type="journal article" date="2004" name="J. Biosci.">
        <title>Heat stress response in plants: a complex game with chaperones and more than twenty heat stress transcription factors.</title>
        <authorList>
            <person name="Baniwal S.K."/>
            <person name="Bharti K."/>
            <person name="Chan K.Y."/>
            <person name="Fauth M."/>
            <person name="Ganguli A."/>
            <person name="Kotak S."/>
            <person name="Mishra S.K."/>
            <person name="Nover L."/>
            <person name="Port M."/>
            <person name="Scharf K.-D."/>
            <person name="Tripp J."/>
            <person name="Weber C."/>
            <person name="Zielinski D."/>
            <person name="von Koskull-Doering P."/>
        </authorList>
    </citation>
    <scope>GENE FAMILY</scope>
    <scope>NOMENCLATURE</scope>
</reference>
<reference key="7">
    <citation type="journal article" date="2008" name="J. Genet. Genomics">
        <title>Genome-wide analysis of heat shock transcription factor families in rice and Arabidopsis.</title>
        <authorList>
            <person name="Guo J."/>
            <person name="Wu J."/>
            <person name="Ji Q."/>
            <person name="Wang C."/>
            <person name="Luo L."/>
            <person name="Yuan Y."/>
            <person name="Wang Y."/>
            <person name="Wang J."/>
        </authorList>
    </citation>
    <scope>GENE FAMILY</scope>
    <scope>NOMENCLATURE</scope>
</reference>
<protein>
    <recommendedName>
        <fullName>Heat stress transcription factor B-4d</fullName>
    </recommendedName>
    <alternativeName>
        <fullName>Heat stress transcription factor 10</fullName>
        <shortName>OsHsf-10</shortName>
    </alternativeName>
</protein>
<name>HFB4D_ORYSJ</name>